<organism>
    <name type="scientific">Porphyromonas gingivalis (strain ATCC BAA-308 / W83)</name>
    <dbReference type="NCBI Taxonomy" id="242619"/>
    <lineage>
        <taxon>Bacteria</taxon>
        <taxon>Pseudomonadati</taxon>
        <taxon>Bacteroidota</taxon>
        <taxon>Bacteroidia</taxon>
        <taxon>Bacteroidales</taxon>
        <taxon>Porphyromonadaceae</taxon>
        <taxon>Porphyromonas</taxon>
    </lineage>
</organism>
<feature type="chain" id="PRO_0000141172" description="Ribose-phosphate pyrophosphokinase">
    <location>
        <begin position="1"/>
        <end position="313"/>
    </location>
</feature>
<feature type="active site" evidence="1">
    <location>
        <position position="195"/>
    </location>
</feature>
<feature type="binding site" evidence="1">
    <location>
        <begin position="40"/>
        <end position="42"/>
    </location>
    <ligand>
        <name>ATP</name>
        <dbReference type="ChEBI" id="CHEBI:30616"/>
    </ligand>
</feature>
<feature type="binding site" evidence="1">
    <location>
        <begin position="98"/>
        <end position="99"/>
    </location>
    <ligand>
        <name>ATP</name>
        <dbReference type="ChEBI" id="CHEBI:30616"/>
    </ligand>
</feature>
<feature type="binding site" evidence="1">
    <location>
        <position position="132"/>
    </location>
    <ligand>
        <name>Mg(2+)</name>
        <dbReference type="ChEBI" id="CHEBI:18420"/>
        <label>1</label>
    </ligand>
</feature>
<feature type="binding site" evidence="1">
    <location>
        <position position="172"/>
    </location>
    <ligand>
        <name>Mg(2+)</name>
        <dbReference type="ChEBI" id="CHEBI:18420"/>
        <label>2</label>
    </ligand>
</feature>
<feature type="binding site" evidence="1">
    <location>
        <position position="197"/>
    </location>
    <ligand>
        <name>D-ribose 5-phosphate</name>
        <dbReference type="ChEBI" id="CHEBI:78346"/>
    </ligand>
</feature>
<feature type="binding site" evidence="1">
    <location>
        <position position="221"/>
    </location>
    <ligand>
        <name>D-ribose 5-phosphate</name>
        <dbReference type="ChEBI" id="CHEBI:78346"/>
    </ligand>
</feature>
<feature type="binding site" evidence="1">
    <location>
        <begin position="225"/>
        <end position="229"/>
    </location>
    <ligand>
        <name>D-ribose 5-phosphate</name>
        <dbReference type="ChEBI" id="CHEBI:78346"/>
    </ligand>
</feature>
<proteinExistence type="inferred from homology"/>
<gene>
    <name evidence="1" type="primary">prs</name>
    <name type="synonym">prsA</name>
    <name type="ordered locus">PG_2097</name>
</gene>
<reference key="1">
    <citation type="journal article" date="2003" name="J. Bacteriol.">
        <title>Complete genome sequence of the oral pathogenic bacterium Porphyromonas gingivalis strain W83.</title>
        <authorList>
            <person name="Nelson K.E."/>
            <person name="Fleischmann R.D."/>
            <person name="DeBoy R.T."/>
            <person name="Paulsen I.T."/>
            <person name="Fouts D.E."/>
            <person name="Eisen J.A."/>
            <person name="Daugherty S.C."/>
            <person name="Dodson R.J."/>
            <person name="Durkin A.S."/>
            <person name="Gwinn M.L."/>
            <person name="Haft D.H."/>
            <person name="Kolonay J.F."/>
            <person name="Nelson W.C."/>
            <person name="Mason T.M."/>
            <person name="Tallon L."/>
            <person name="Gray J."/>
            <person name="Granger D."/>
            <person name="Tettelin H."/>
            <person name="Dong H."/>
            <person name="Galvin J.L."/>
            <person name="Duncan M.J."/>
            <person name="Dewhirst F.E."/>
            <person name="Fraser C.M."/>
        </authorList>
    </citation>
    <scope>NUCLEOTIDE SEQUENCE [LARGE SCALE GENOMIC DNA]</scope>
    <source>
        <strain>ATCC BAA-308 / W83</strain>
    </source>
</reference>
<comment type="function">
    <text evidence="1">Involved in the biosynthesis of the central metabolite phospho-alpha-D-ribosyl-1-pyrophosphate (PRPP) via the transfer of pyrophosphoryl group from ATP to 1-hydroxyl of ribose-5-phosphate (Rib-5-P).</text>
</comment>
<comment type="catalytic activity">
    <reaction evidence="1">
        <text>D-ribose 5-phosphate + ATP = 5-phospho-alpha-D-ribose 1-diphosphate + AMP + H(+)</text>
        <dbReference type="Rhea" id="RHEA:15609"/>
        <dbReference type="ChEBI" id="CHEBI:15378"/>
        <dbReference type="ChEBI" id="CHEBI:30616"/>
        <dbReference type="ChEBI" id="CHEBI:58017"/>
        <dbReference type="ChEBI" id="CHEBI:78346"/>
        <dbReference type="ChEBI" id="CHEBI:456215"/>
        <dbReference type="EC" id="2.7.6.1"/>
    </reaction>
</comment>
<comment type="cofactor">
    <cofactor evidence="1">
        <name>Mg(2+)</name>
        <dbReference type="ChEBI" id="CHEBI:18420"/>
    </cofactor>
    <text evidence="1">Binds 2 Mg(2+) ions per subunit.</text>
</comment>
<comment type="pathway">
    <text evidence="1">Metabolic intermediate biosynthesis; 5-phospho-alpha-D-ribose 1-diphosphate biosynthesis; 5-phospho-alpha-D-ribose 1-diphosphate from D-ribose 5-phosphate (route I): step 1/1.</text>
</comment>
<comment type="subunit">
    <text evidence="1">Homohexamer.</text>
</comment>
<comment type="subcellular location">
    <subcellularLocation>
        <location evidence="1">Cytoplasm</location>
    </subcellularLocation>
</comment>
<comment type="similarity">
    <text evidence="1">Belongs to the ribose-phosphate pyrophosphokinase family. Class I subfamily.</text>
</comment>
<keyword id="KW-0067">ATP-binding</keyword>
<keyword id="KW-0963">Cytoplasm</keyword>
<keyword id="KW-0418">Kinase</keyword>
<keyword id="KW-0460">Magnesium</keyword>
<keyword id="KW-0479">Metal-binding</keyword>
<keyword id="KW-0545">Nucleotide biosynthesis</keyword>
<keyword id="KW-0547">Nucleotide-binding</keyword>
<keyword id="KW-1185">Reference proteome</keyword>
<keyword id="KW-0808">Transferase</keyword>
<sequence length="313" mass="34780">MNNENNFSVFSGTNSRYLAEKICNSLGCPLGRMNIEHFADGEFAVSYEESIRGRDVFLVQSTFPSSDNLMELLLMIDAAKRASAHYITAVIPYFGWARQDRKDKPRVSIGAKLIADLLSKAGITRLITMDLHADQIQGFFDVPVDHLYGSTVFMEYIRKNMPLENLVVATPDVGGTKRANSYAKHLGVPMVICHKSRLKANEIAEMRIIGDVQDKDVLLVDDIVDTAGTITKAADLMKENGARSVCAIASHAVMSDPASMRVDQSTLKEMIFTDSIPYPHKCEKVKILSVADLFAEAIKRVCSHESITTLYYF</sequence>
<dbReference type="EC" id="2.7.6.1" evidence="1"/>
<dbReference type="EMBL" id="AE015924">
    <property type="protein sequence ID" value="AAQ67056.1"/>
    <property type="molecule type" value="Genomic_DNA"/>
</dbReference>
<dbReference type="RefSeq" id="WP_005873771.1">
    <property type="nucleotide sequence ID" value="NC_002950.2"/>
</dbReference>
<dbReference type="SMR" id="Q7MT83"/>
<dbReference type="STRING" id="242619.PG_2097"/>
<dbReference type="EnsemblBacteria" id="AAQ67056">
    <property type="protein sequence ID" value="AAQ67056"/>
    <property type="gene ID" value="PG_2097"/>
</dbReference>
<dbReference type="KEGG" id="pgi:PG_2097"/>
<dbReference type="eggNOG" id="COG0462">
    <property type="taxonomic scope" value="Bacteria"/>
</dbReference>
<dbReference type="HOGENOM" id="CLU_033546_4_0_10"/>
<dbReference type="UniPathway" id="UPA00087">
    <property type="reaction ID" value="UER00172"/>
</dbReference>
<dbReference type="Proteomes" id="UP000000588">
    <property type="component" value="Chromosome"/>
</dbReference>
<dbReference type="GO" id="GO:0005737">
    <property type="term" value="C:cytoplasm"/>
    <property type="evidence" value="ECO:0007669"/>
    <property type="project" value="UniProtKB-SubCell"/>
</dbReference>
<dbReference type="GO" id="GO:0002189">
    <property type="term" value="C:ribose phosphate diphosphokinase complex"/>
    <property type="evidence" value="ECO:0007669"/>
    <property type="project" value="TreeGrafter"/>
</dbReference>
<dbReference type="GO" id="GO:0005524">
    <property type="term" value="F:ATP binding"/>
    <property type="evidence" value="ECO:0007669"/>
    <property type="project" value="UniProtKB-KW"/>
</dbReference>
<dbReference type="GO" id="GO:0016301">
    <property type="term" value="F:kinase activity"/>
    <property type="evidence" value="ECO:0007669"/>
    <property type="project" value="UniProtKB-KW"/>
</dbReference>
<dbReference type="GO" id="GO:0000287">
    <property type="term" value="F:magnesium ion binding"/>
    <property type="evidence" value="ECO:0007669"/>
    <property type="project" value="UniProtKB-UniRule"/>
</dbReference>
<dbReference type="GO" id="GO:0004749">
    <property type="term" value="F:ribose phosphate diphosphokinase activity"/>
    <property type="evidence" value="ECO:0007669"/>
    <property type="project" value="UniProtKB-UniRule"/>
</dbReference>
<dbReference type="GO" id="GO:0006015">
    <property type="term" value="P:5-phosphoribose 1-diphosphate biosynthetic process"/>
    <property type="evidence" value="ECO:0007669"/>
    <property type="project" value="UniProtKB-UniRule"/>
</dbReference>
<dbReference type="GO" id="GO:0006164">
    <property type="term" value="P:purine nucleotide biosynthetic process"/>
    <property type="evidence" value="ECO:0007669"/>
    <property type="project" value="TreeGrafter"/>
</dbReference>
<dbReference type="GO" id="GO:0009156">
    <property type="term" value="P:ribonucleoside monophosphate biosynthetic process"/>
    <property type="evidence" value="ECO:0007669"/>
    <property type="project" value="InterPro"/>
</dbReference>
<dbReference type="CDD" id="cd06223">
    <property type="entry name" value="PRTases_typeI"/>
    <property type="match status" value="1"/>
</dbReference>
<dbReference type="FunFam" id="3.40.50.2020:FF:000007">
    <property type="entry name" value="Ribose-phosphate pyrophosphokinase"/>
    <property type="match status" value="1"/>
</dbReference>
<dbReference type="Gene3D" id="3.40.50.2020">
    <property type="match status" value="2"/>
</dbReference>
<dbReference type="HAMAP" id="MF_00583_B">
    <property type="entry name" value="RibP_PPkinase_B"/>
    <property type="match status" value="1"/>
</dbReference>
<dbReference type="InterPro" id="IPR000842">
    <property type="entry name" value="PRib_PP_synth_CS"/>
</dbReference>
<dbReference type="InterPro" id="IPR029099">
    <property type="entry name" value="Pribosyltran_N"/>
</dbReference>
<dbReference type="InterPro" id="IPR000836">
    <property type="entry name" value="PRibTrfase_dom"/>
</dbReference>
<dbReference type="InterPro" id="IPR029057">
    <property type="entry name" value="PRTase-like"/>
</dbReference>
<dbReference type="InterPro" id="IPR005946">
    <property type="entry name" value="Rib-P_diPkinase"/>
</dbReference>
<dbReference type="InterPro" id="IPR037515">
    <property type="entry name" value="Rib-P_diPkinase_bac"/>
</dbReference>
<dbReference type="NCBIfam" id="NF002320">
    <property type="entry name" value="PRK01259.1"/>
    <property type="match status" value="1"/>
</dbReference>
<dbReference type="NCBIfam" id="TIGR01251">
    <property type="entry name" value="ribP_PPkin"/>
    <property type="match status" value="1"/>
</dbReference>
<dbReference type="PANTHER" id="PTHR10210">
    <property type="entry name" value="RIBOSE-PHOSPHATE DIPHOSPHOKINASE FAMILY MEMBER"/>
    <property type="match status" value="1"/>
</dbReference>
<dbReference type="PANTHER" id="PTHR10210:SF41">
    <property type="entry name" value="RIBOSE-PHOSPHATE PYROPHOSPHOKINASE 1, CHLOROPLASTIC"/>
    <property type="match status" value="1"/>
</dbReference>
<dbReference type="Pfam" id="PF14572">
    <property type="entry name" value="Pribosyl_synth"/>
    <property type="match status" value="1"/>
</dbReference>
<dbReference type="Pfam" id="PF13793">
    <property type="entry name" value="Pribosyltran_N"/>
    <property type="match status" value="1"/>
</dbReference>
<dbReference type="SMART" id="SM01400">
    <property type="entry name" value="Pribosyltran_N"/>
    <property type="match status" value="1"/>
</dbReference>
<dbReference type="SUPFAM" id="SSF53271">
    <property type="entry name" value="PRTase-like"/>
    <property type="match status" value="1"/>
</dbReference>
<dbReference type="PROSITE" id="PS00114">
    <property type="entry name" value="PRPP_SYNTHASE"/>
    <property type="match status" value="1"/>
</dbReference>
<evidence type="ECO:0000255" key="1">
    <source>
        <dbReference type="HAMAP-Rule" id="MF_00583"/>
    </source>
</evidence>
<accession>Q7MT83</accession>
<name>KPRS_PORGI</name>
<protein>
    <recommendedName>
        <fullName evidence="1">Ribose-phosphate pyrophosphokinase</fullName>
        <shortName evidence="1">RPPK</shortName>
        <ecNumber evidence="1">2.7.6.1</ecNumber>
    </recommendedName>
    <alternativeName>
        <fullName evidence="1">5-phospho-D-ribosyl alpha-1-diphosphate synthase</fullName>
    </alternativeName>
    <alternativeName>
        <fullName evidence="1">Phosphoribosyl diphosphate synthase</fullName>
    </alternativeName>
    <alternativeName>
        <fullName evidence="1">Phosphoribosyl pyrophosphate synthase</fullName>
        <shortName evidence="1">P-Rib-PP synthase</shortName>
        <shortName evidence="1">PRPP synthase</shortName>
        <shortName evidence="1">PRPPase</shortName>
    </alternativeName>
</protein>